<proteinExistence type="inferred from homology"/>
<evidence type="ECO:0000255" key="1">
    <source>
        <dbReference type="HAMAP-Rule" id="MF_00206"/>
    </source>
</evidence>
<evidence type="ECO:0000255" key="2">
    <source>
        <dbReference type="PROSITE-ProRule" id="PRU01266"/>
    </source>
</evidence>
<name>LIPA_CHLTB</name>
<comment type="function">
    <text evidence="1">Catalyzes the radical-mediated insertion of two sulfur atoms into the C-6 and C-8 positions of the octanoyl moiety bound to the lipoyl domains of lipoate-dependent enzymes, thereby converting the octanoylated domains into lipoylated derivatives.</text>
</comment>
<comment type="catalytic activity">
    <reaction evidence="1">
        <text>[[Fe-S] cluster scaffold protein carrying a second [4Fe-4S](2+) cluster] + N(6)-octanoyl-L-lysyl-[protein] + 2 oxidized [2Fe-2S]-[ferredoxin] + 2 S-adenosyl-L-methionine + 4 H(+) = [[Fe-S] cluster scaffold protein] + N(6)-[(R)-dihydrolipoyl]-L-lysyl-[protein] + 4 Fe(3+) + 2 hydrogen sulfide + 2 5'-deoxyadenosine + 2 L-methionine + 2 reduced [2Fe-2S]-[ferredoxin]</text>
        <dbReference type="Rhea" id="RHEA:16585"/>
        <dbReference type="Rhea" id="RHEA-COMP:9928"/>
        <dbReference type="Rhea" id="RHEA-COMP:10000"/>
        <dbReference type="Rhea" id="RHEA-COMP:10001"/>
        <dbReference type="Rhea" id="RHEA-COMP:10475"/>
        <dbReference type="Rhea" id="RHEA-COMP:14568"/>
        <dbReference type="Rhea" id="RHEA-COMP:14569"/>
        <dbReference type="ChEBI" id="CHEBI:15378"/>
        <dbReference type="ChEBI" id="CHEBI:17319"/>
        <dbReference type="ChEBI" id="CHEBI:29034"/>
        <dbReference type="ChEBI" id="CHEBI:29919"/>
        <dbReference type="ChEBI" id="CHEBI:33722"/>
        <dbReference type="ChEBI" id="CHEBI:33737"/>
        <dbReference type="ChEBI" id="CHEBI:33738"/>
        <dbReference type="ChEBI" id="CHEBI:57844"/>
        <dbReference type="ChEBI" id="CHEBI:59789"/>
        <dbReference type="ChEBI" id="CHEBI:78809"/>
        <dbReference type="ChEBI" id="CHEBI:83100"/>
        <dbReference type="EC" id="2.8.1.8"/>
    </reaction>
</comment>
<comment type="cofactor">
    <cofactor evidence="1">
        <name>[4Fe-4S] cluster</name>
        <dbReference type="ChEBI" id="CHEBI:49883"/>
    </cofactor>
    <text evidence="1">Binds 2 [4Fe-4S] clusters per subunit. One cluster is coordinated with 3 cysteines and an exchangeable S-adenosyl-L-methionine.</text>
</comment>
<comment type="pathway">
    <text evidence="1">Protein modification; protein lipoylation via endogenous pathway; protein N(6)-(lipoyl)lysine from octanoyl-[acyl-carrier-protein]: step 2/2.</text>
</comment>
<comment type="subcellular location">
    <subcellularLocation>
        <location evidence="1">Cytoplasm</location>
    </subcellularLocation>
</comment>
<comment type="similarity">
    <text evidence="1">Belongs to the radical SAM superfamily. Lipoyl synthase family.</text>
</comment>
<organism>
    <name type="scientific">Chlamydia trachomatis serovar L2b (strain UCH-1/proctitis)</name>
    <dbReference type="NCBI Taxonomy" id="471473"/>
    <lineage>
        <taxon>Bacteria</taxon>
        <taxon>Pseudomonadati</taxon>
        <taxon>Chlamydiota</taxon>
        <taxon>Chlamydiia</taxon>
        <taxon>Chlamydiales</taxon>
        <taxon>Chlamydiaceae</taxon>
        <taxon>Chlamydia/Chlamydophila group</taxon>
        <taxon>Chlamydia</taxon>
    </lineage>
</organism>
<reference key="1">
    <citation type="journal article" date="2008" name="Genome Res.">
        <title>Chlamydia trachomatis: genome sequence analysis of lymphogranuloma venereum isolates.</title>
        <authorList>
            <person name="Thomson N.R."/>
            <person name="Holden M.T.G."/>
            <person name="Carder C."/>
            <person name="Lennard N."/>
            <person name="Lockey S.J."/>
            <person name="Marsh P."/>
            <person name="Skipp P."/>
            <person name="O'Connor C.D."/>
            <person name="Goodhead I."/>
            <person name="Norbertzcak H."/>
            <person name="Harris B."/>
            <person name="Ormond D."/>
            <person name="Rance R."/>
            <person name="Quail M.A."/>
            <person name="Parkhill J."/>
            <person name="Stephens R.S."/>
            <person name="Clarke I.N."/>
        </authorList>
    </citation>
    <scope>NUCLEOTIDE SEQUENCE [LARGE SCALE GENOMIC DNA]</scope>
    <source>
        <strain>UCH-1/proctitis</strain>
    </source>
</reference>
<sequence>MTDSESPTPKKSIPARFPKWLRQKLPLGRVFAQTDNTIKNKGLPTVCEEASCPNRTHCWSRHTATYLALGDACTRRCGFCDIDFTRNPLPPDPEEGAKIAESAKALGLKHIVITMVSRDDLEDGGASALVHIIETLHTELPTATIEVLASDFEGNIAALHHLLDTHIAIYNHNVETVERLTPFVRHKATYRRSLMMLENAAKYLPNLMTKSGIMVGLGEQESEVKQTLKDLADHGVKIVTIGQYLRPSRRHIPVKSYVSPETFDYYRSVGESLGLFIYAGPFVRSSFNADSVFEAMRQRETSTSSLLPNKD</sequence>
<gene>
    <name evidence="1" type="primary">lipA</name>
    <name type="ordered locus">CTLon_0815</name>
</gene>
<accession>B0BA11</accession>
<dbReference type="EC" id="2.8.1.8" evidence="1"/>
<dbReference type="EMBL" id="AM884177">
    <property type="protein sequence ID" value="CAP07212.1"/>
    <property type="molecule type" value="Genomic_DNA"/>
</dbReference>
<dbReference type="RefSeq" id="WP_009873898.1">
    <property type="nucleotide sequence ID" value="NC_010280.2"/>
</dbReference>
<dbReference type="SMR" id="B0BA11"/>
<dbReference type="KEGG" id="ctl:CTLon_0815"/>
<dbReference type="HOGENOM" id="CLU_033144_2_1_0"/>
<dbReference type="UniPathway" id="UPA00538">
    <property type="reaction ID" value="UER00593"/>
</dbReference>
<dbReference type="Proteomes" id="UP001154401">
    <property type="component" value="Chromosome"/>
</dbReference>
<dbReference type="GO" id="GO:0005737">
    <property type="term" value="C:cytoplasm"/>
    <property type="evidence" value="ECO:0007669"/>
    <property type="project" value="UniProtKB-SubCell"/>
</dbReference>
<dbReference type="GO" id="GO:0051539">
    <property type="term" value="F:4 iron, 4 sulfur cluster binding"/>
    <property type="evidence" value="ECO:0007669"/>
    <property type="project" value="UniProtKB-UniRule"/>
</dbReference>
<dbReference type="GO" id="GO:0016992">
    <property type="term" value="F:lipoate synthase activity"/>
    <property type="evidence" value="ECO:0007669"/>
    <property type="project" value="UniProtKB-UniRule"/>
</dbReference>
<dbReference type="GO" id="GO:0046872">
    <property type="term" value="F:metal ion binding"/>
    <property type="evidence" value="ECO:0007669"/>
    <property type="project" value="UniProtKB-KW"/>
</dbReference>
<dbReference type="CDD" id="cd01335">
    <property type="entry name" value="Radical_SAM"/>
    <property type="match status" value="1"/>
</dbReference>
<dbReference type="FunFam" id="3.20.20.70:FF:000186">
    <property type="entry name" value="Lipoyl synthase"/>
    <property type="match status" value="1"/>
</dbReference>
<dbReference type="Gene3D" id="3.20.20.70">
    <property type="entry name" value="Aldolase class I"/>
    <property type="match status" value="1"/>
</dbReference>
<dbReference type="HAMAP" id="MF_00206">
    <property type="entry name" value="Lipoyl_synth"/>
    <property type="match status" value="1"/>
</dbReference>
<dbReference type="InterPro" id="IPR013785">
    <property type="entry name" value="Aldolase_TIM"/>
</dbReference>
<dbReference type="InterPro" id="IPR006638">
    <property type="entry name" value="Elp3/MiaA/NifB-like_rSAM"/>
</dbReference>
<dbReference type="InterPro" id="IPR031691">
    <property type="entry name" value="LIAS_N"/>
</dbReference>
<dbReference type="InterPro" id="IPR003698">
    <property type="entry name" value="Lipoyl_synth"/>
</dbReference>
<dbReference type="InterPro" id="IPR007197">
    <property type="entry name" value="rSAM"/>
</dbReference>
<dbReference type="NCBIfam" id="TIGR00510">
    <property type="entry name" value="lipA"/>
    <property type="match status" value="1"/>
</dbReference>
<dbReference type="NCBIfam" id="NF004019">
    <property type="entry name" value="PRK05481.1"/>
    <property type="match status" value="1"/>
</dbReference>
<dbReference type="NCBIfam" id="NF009544">
    <property type="entry name" value="PRK12928.1"/>
    <property type="match status" value="1"/>
</dbReference>
<dbReference type="PANTHER" id="PTHR10949">
    <property type="entry name" value="LIPOYL SYNTHASE"/>
    <property type="match status" value="1"/>
</dbReference>
<dbReference type="PANTHER" id="PTHR10949:SF0">
    <property type="entry name" value="LIPOYL SYNTHASE, MITOCHONDRIAL"/>
    <property type="match status" value="1"/>
</dbReference>
<dbReference type="Pfam" id="PF16881">
    <property type="entry name" value="LIAS_N"/>
    <property type="match status" value="1"/>
</dbReference>
<dbReference type="Pfam" id="PF04055">
    <property type="entry name" value="Radical_SAM"/>
    <property type="match status" value="1"/>
</dbReference>
<dbReference type="PIRSF" id="PIRSF005963">
    <property type="entry name" value="Lipoyl_synth"/>
    <property type="match status" value="1"/>
</dbReference>
<dbReference type="SFLD" id="SFLDF00271">
    <property type="entry name" value="lipoyl_synthase"/>
    <property type="match status" value="1"/>
</dbReference>
<dbReference type="SFLD" id="SFLDS00029">
    <property type="entry name" value="Radical_SAM"/>
    <property type="match status" value="1"/>
</dbReference>
<dbReference type="SMART" id="SM00729">
    <property type="entry name" value="Elp3"/>
    <property type="match status" value="1"/>
</dbReference>
<dbReference type="SUPFAM" id="SSF102114">
    <property type="entry name" value="Radical SAM enzymes"/>
    <property type="match status" value="1"/>
</dbReference>
<dbReference type="PROSITE" id="PS51918">
    <property type="entry name" value="RADICAL_SAM"/>
    <property type="match status" value="1"/>
</dbReference>
<feature type="chain" id="PRO_1000099595" description="Lipoyl synthase">
    <location>
        <begin position="1"/>
        <end position="311"/>
    </location>
</feature>
<feature type="domain" description="Radical SAM core" evidence="2">
    <location>
        <begin position="59"/>
        <end position="276"/>
    </location>
</feature>
<feature type="binding site" evidence="1">
    <location>
        <position position="47"/>
    </location>
    <ligand>
        <name>[4Fe-4S] cluster</name>
        <dbReference type="ChEBI" id="CHEBI:49883"/>
        <label>1</label>
    </ligand>
</feature>
<feature type="binding site" evidence="1">
    <location>
        <position position="52"/>
    </location>
    <ligand>
        <name>[4Fe-4S] cluster</name>
        <dbReference type="ChEBI" id="CHEBI:49883"/>
        <label>1</label>
    </ligand>
</feature>
<feature type="binding site" evidence="1">
    <location>
        <position position="58"/>
    </location>
    <ligand>
        <name>[4Fe-4S] cluster</name>
        <dbReference type="ChEBI" id="CHEBI:49883"/>
        <label>1</label>
    </ligand>
</feature>
<feature type="binding site" evidence="1">
    <location>
        <position position="73"/>
    </location>
    <ligand>
        <name>[4Fe-4S] cluster</name>
        <dbReference type="ChEBI" id="CHEBI:49883"/>
        <label>2</label>
        <note>4Fe-4S-S-AdoMet</note>
    </ligand>
</feature>
<feature type="binding site" evidence="1">
    <location>
        <position position="77"/>
    </location>
    <ligand>
        <name>[4Fe-4S] cluster</name>
        <dbReference type="ChEBI" id="CHEBI:49883"/>
        <label>2</label>
        <note>4Fe-4S-S-AdoMet</note>
    </ligand>
</feature>
<feature type="binding site" evidence="1">
    <location>
        <position position="80"/>
    </location>
    <ligand>
        <name>[4Fe-4S] cluster</name>
        <dbReference type="ChEBI" id="CHEBI:49883"/>
        <label>2</label>
        <note>4Fe-4S-S-AdoMet</note>
    </ligand>
</feature>
<feature type="binding site" evidence="1">
    <location>
        <position position="286"/>
    </location>
    <ligand>
        <name>[4Fe-4S] cluster</name>
        <dbReference type="ChEBI" id="CHEBI:49883"/>
        <label>1</label>
    </ligand>
</feature>
<protein>
    <recommendedName>
        <fullName evidence="1">Lipoyl synthase</fullName>
        <ecNumber evidence="1">2.8.1.8</ecNumber>
    </recommendedName>
    <alternativeName>
        <fullName evidence="1">Lip-syn</fullName>
        <shortName evidence="1">LS</shortName>
    </alternativeName>
    <alternativeName>
        <fullName evidence="1">Lipoate synthase</fullName>
    </alternativeName>
    <alternativeName>
        <fullName evidence="1">Lipoic acid synthase</fullName>
    </alternativeName>
    <alternativeName>
        <fullName evidence="1">Sulfur insertion protein LipA</fullName>
    </alternativeName>
</protein>
<keyword id="KW-0004">4Fe-4S</keyword>
<keyword id="KW-0963">Cytoplasm</keyword>
<keyword id="KW-0408">Iron</keyword>
<keyword id="KW-0411">Iron-sulfur</keyword>
<keyword id="KW-0479">Metal-binding</keyword>
<keyword id="KW-0949">S-adenosyl-L-methionine</keyword>
<keyword id="KW-0808">Transferase</keyword>